<keyword id="KW-0131">Cell cycle</keyword>
<keyword id="KW-0132">Cell division</keyword>
<keyword id="KW-0195">Cyclin</keyword>
<keyword id="KW-1185">Reference proteome</keyword>
<protein>
    <recommendedName>
        <fullName>Putative cyclin-F1-4</fullName>
        <shortName>CycF1;4</shortName>
    </recommendedName>
</protein>
<organism>
    <name type="scientific">Oryza sativa subsp. japonica</name>
    <name type="common">Rice</name>
    <dbReference type="NCBI Taxonomy" id="39947"/>
    <lineage>
        <taxon>Eukaryota</taxon>
        <taxon>Viridiplantae</taxon>
        <taxon>Streptophyta</taxon>
        <taxon>Embryophyta</taxon>
        <taxon>Tracheophyta</taxon>
        <taxon>Spermatophyta</taxon>
        <taxon>Magnoliopsida</taxon>
        <taxon>Liliopsida</taxon>
        <taxon>Poales</taxon>
        <taxon>Poaceae</taxon>
        <taxon>BOP clade</taxon>
        <taxon>Oryzoideae</taxon>
        <taxon>Oryzeae</taxon>
        <taxon>Oryzinae</taxon>
        <taxon>Oryza</taxon>
        <taxon>Oryza sativa</taxon>
    </lineage>
</organism>
<name>CCF14_ORYSJ</name>
<sequence>MGDLILDPYMEDAILDHSCLAELLADQTALPLFHPYSGGATPQMVDTDTFLRAIGALPPLAPPPAAPLAPAPPDSPRTPHTYGSLLPVYGDLPPLSGAVLQEPLPLPEGSDHPVSPKKTIEVASLLQERADQPVVTSNSATTTRPQLCAPYDDDIEATLRAMETNPVERPSPYFLETTQGGRMTALLRLVAATTVFLAAKYEDQYTLRKIDASMVAARCGYTSETRHKMVSCMETEILAALDYNLGGPTAYTFVEHFTRYYGKGKEEKLMREAAHWFADGSLLTYGFHRYLPSMVAASAIFLARLHVRGHEPWRKDLAELTGFWYSDVSTYGPTADTFVEHFTRYKCTTAGERKSYGCMQRLERDVADQSLMNYVRLPGATIPAVHGGGGRRASISVARCSLNRHDALVWSTELQELTGYSFEDLVSCIFAM</sequence>
<evidence type="ECO:0000305" key="1"/>
<reference key="1">
    <citation type="journal article" date="2005" name="Nature">
        <title>The map-based sequence of the rice genome.</title>
        <authorList>
            <consortium name="International rice genome sequencing project (IRGSP)"/>
        </authorList>
    </citation>
    <scope>NUCLEOTIDE SEQUENCE [LARGE SCALE GENOMIC DNA]</scope>
    <source>
        <strain>cv. Nipponbare</strain>
    </source>
</reference>
<reference key="2">
    <citation type="journal article" date="2013" name="Rice">
        <title>Improvement of the Oryza sativa Nipponbare reference genome using next generation sequence and optical map data.</title>
        <authorList>
            <person name="Kawahara Y."/>
            <person name="de la Bastide M."/>
            <person name="Hamilton J.P."/>
            <person name="Kanamori H."/>
            <person name="McCombie W.R."/>
            <person name="Ouyang S."/>
            <person name="Schwartz D.C."/>
            <person name="Tanaka T."/>
            <person name="Wu J."/>
            <person name="Zhou S."/>
            <person name="Childs K.L."/>
            <person name="Davidson R.M."/>
            <person name="Lin H."/>
            <person name="Quesada-Ocampo L."/>
            <person name="Vaillancourt B."/>
            <person name="Sakai H."/>
            <person name="Lee S.S."/>
            <person name="Kim J."/>
            <person name="Numa H."/>
            <person name="Itoh T."/>
            <person name="Buell C.R."/>
            <person name="Matsumoto T."/>
        </authorList>
    </citation>
    <scope>GENOME REANNOTATION</scope>
    <source>
        <strain>cv. Nipponbare</strain>
    </source>
</reference>
<reference key="3">
    <citation type="journal article" date="2005" name="PLoS Biol.">
        <title>The genomes of Oryza sativa: a history of duplications.</title>
        <authorList>
            <person name="Yu J."/>
            <person name="Wang J."/>
            <person name="Lin W."/>
            <person name="Li S."/>
            <person name="Li H."/>
            <person name="Zhou J."/>
            <person name="Ni P."/>
            <person name="Dong W."/>
            <person name="Hu S."/>
            <person name="Zeng C."/>
            <person name="Zhang J."/>
            <person name="Zhang Y."/>
            <person name="Li R."/>
            <person name="Xu Z."/>
            <person name="Li S."/>
            <person name="Li X."/>
            <person name="Zheng H."/>
            <person name="Cong L."/>
            <person name="Lin L."/>
            <person name="Yin J."/>
            <person name="Geng J."/>
            <person name="Li G."/>
            <person name="Shi J."/>
            <person name="Liu J."/>
            <person name="Lv H."/>
            <person name="Li J."/>
            <person name="Wang J."/>
            <person name="Deng Y."/>
            <person name="Ran L."/>
            <person name="Shi X."/>
            <person name="Wang X."/>
            <person name="Wu Q."/>
            <person name="Li C."/>
            <person name="Ren X."/>
            <person name="Wang J."/>
            <person name="Wang X."/>
            <person name="Li D."/>
            <person name="Liu D."/>
            <person name="Zhang X."/>
            <person name="Ji Z."/>
            <person name="Zhao W."/>
            <person name="Sun Y."/>
            <person name="Zhang Z."/>
            <person name="Bao J."/>
            <person name="Han Y."/>
            <person name="Dong L."/>
            <person name="Ji J."/>
            <person name="Chen P."/>
            <person name="Wu S."/>
            <person name="Liu J."/>
            <person name="Xiao Y."/>
            <person name="Bu D."/>
            <person name="Tan J."/>
            <person name="Yang L."/>
            <person name="Ye C."/>
            <person name="Zhang J."/>
            <person name="Xu J."/>
            <person name="Zhou Y."/>
            <person name="Yu Y."/>
            <person name="Zhang B."/>
            <person name="Zhuang S."/>
            <person name="Wei H."/>
            <person name="Liu B."/>
            <person name="Lei M."/>
            <person name="Yu H."/>
            <person name="Li Y."/>
            <person name="Xu H."/>
            <person name="Wei S."/>
            <person name="He X."/>
            <person name="Fang L."/>
            <person name="Zhang Z."/>
            <person name="Zhang Y."/>
            <person name="Huang X."/>
            <person name="Su Z."/>
            <person name="Tong W."/>
            <person name="Li J."/>
            <person name="Tong Z."/>
            <person name="Li S."/>
            <person name="Ye J."/>
            <person name="Wang L."/>
            <person name="Fang L."/>
            <person name="Lei T."/>
            <person name="Chen C.-S."/>
            <person name="Chen H.-C."/>
            <person name="Xu Z."/>
            <person name="Li H."/>
            <person name="Huang H."/>
            <person name="Zhang F."/>
            <person name="Xu H."/>
            <person name="Li N."/>
            <person name="Zhao C."/>
            <person name="Li S."/>
            <person name="Dong L."/>
            <person name="Huang Y."/>
            <person name="Li L."/>
            <person name="Xi Y."/>
            <person name="Qi Q."/>
            <person name="Li W."/>
            <person name="Zhang B."/>
            <person name="Hu W."/>
            <person name="Zhang Y."/>
            <person name="Tian X."/>
            <person name="Jiao Y."/>
            <person name="Liang X."/>
            <person name="Jin J."/>
            <person name="Gao L."/>
            <person name="Zheng W."/>
            <person name="Hao B."/>
            <person name="Liu S.-M."/>
            <person name="Wang W."/>
            <person name="Yuan L."/>
            <person name="Cao M."/>
            <person name="McDermott J."/>
            <person name="Samudrala R."/>
            <person name="Wang J."/>
            <person name="Wong G.K.-S."/>
            <person name="Yang H."/>
        </authorList>
    </citation>
    <scope>NUCLEOTIDE SEQUENCE [LARGE SCALE GENOMIC DNA]</scope>
    <source>
        <strain>cv. Nipponbare</strain>
    </source>
</reference>
<reference key="4">
    <citation type="journal article" date="2006" name="Mol. Genet. Genomics">
        <title>Genome-wide analysis of cyclin family in rice (Oryza sativa L.).</title>
        <authorList>
            <person name="La H."/>
            <person name="Li J."/>
            <person name="Ji Z."/>
            <person name="Cheng Y."/>
            <person name="Li X."/>
            <person name="Jiang S."/>
            <person name="Venkatesh P.N."/>
            <person name="Ramachandran S."/>
        </authorList>
    </citation>
    <scope>GENE FAMILY</scope>
    <scope>NOMENCLATURE</scope>
</reference>
<accession>Q6K8S3</accession>
<accession>A0A0P0VLD6</accession>
<gene>
    <name type="primary">CycF1-4</name>
    <name type="ordered locus">Os02g0604700</name>
    <name type="ordered locus">LOC_Os02g39230</name>
    <name type="ORF">OJ1058_F07.6</name>
    <name type="ORF">OsJ_007218</name>
</gene>
<feature type="chain" id="PRO_0000287044" description="Putative cyclin-F1-4">
    <location>
        <begin position="1"/>
        <end position="432"/>
    </location>
</feature>
<comment type="similarity">
    <text evidence="1">Belongs to the cyclin family. Cyclin F subfamily.</text>
</comment>
<dbReference type="EMBL" id="AP004111">
    <property type="protein sequence ID" value="BAD19319.1"/>
    <property type="molecule type" value="Genomic_DNA"/>
</dbReference>
<dbReference type="EMBL" id="AP014958">
    <property type="protein sequence ID" value="BAS79651.1"/>
    <property type="molecule type" value="Genomic_DNA"/>
</dbReference>
<dbReference type="EMBL" id="CM000139">
    <property type="protein sequence ID" value="EAZ23735.1"/>
    <property type="molecule type" value="Genomic_DNA"/>
</dbReference>
<dbReference type="SMR" id="Q6K8S3"/>
<dbReference type="FunCoup" id="Q6K8S3">
    <property type="interactions" value="14"/>
</dbReference>
<dbReference type="STRING" id="39947.Q6K8S3"/>
<dbReference type="PaxDb" id="39947-Q6K8S3"/>
<dbReference type="EnsemblPlants" id="Os02t0604700-00">
    <property type="protein sequence ID" value="Os02t0604700-00"/>
    <property type="gene ID" value="Os02g0604700"/>
</dbReference>
<dbReference type="Gramene" id="Os02t0604700-00">
    <property type="protein sequence ID" value="Os02t0604700-00"/>
    <property type="gene ID" value="Os02g0604700"/>
</dbReference>
<dbReference type="eggNOG" id="KOG0654">
    <property type="taxonomic scope" value="Eukaryota"/>
</dbReference>
<dbReference type="HOGENOM" id="CLU_052910_1_0_1"/>
<dbReference type="InParanoid" id="Q6K8S3"/>
<dbReference type="OMA" id="PVNHDDF"/>
<dbReference type="Proteomes" id="UP000000763">
    <property type="component" value="Chromosome 2"/>
</dbReference>
<dbReference type="Proteomes" id="UP000007752">
    <property type="component" value="Chromosome 2"/>
</dbReference>
<dbReference type="Proteomes" id="UP000059680">
    <property type="component" value="Chromosome 2"/>
</dbReference>
<dbReference type="GO" id="GO:0000307">
    <property type="term" value="C:cyclin-dependent protein kinase holoenzyme complex"/>
    <property type="evidence" value="ECO:0000318"/>
    <property type="project" value="GO_Central"/>
</dbReference>
<dbReference type="GO" id="GO:0005737">
    <property type="term" value="C:cytoplasm"/>
    <property type="evidence" value="ECO:0000318"/>
    <property type="project" value="GO_Central"/>
</dbReference>
<dbReference type="GO" id="GO:0005634">
    <property type="term" value="C:nucleus"/>
    <property type="evidence" value="ECO:0000318"/>
    <property type="project" value="GO_Central"/>
</dbReference>
<dbReference type="GO" id="GO:0016538">
    <property type="term" value="F:cyclin-dependent protein serine/threonine kinase regulator activity"/>
    <property type="evidence" value="ECO:0000318"/>
    <property type="project" value="GO_Central"/>
</dbReference>
<dbReference type="GO" id="GO:0051301">
    <property type="term" value="P:cell division"/>
    <property type="evidence" value="ECO:0007669"/>
    <property type="project" value="UniProtKB-KW"/>
</dbReference>
<dbReference type="GO" id="GO:0000082">
    <property type="term" value="P:G1/S transition of mitotic cell cycle"/>
    <property type="evidence" value="ECO:0000318"/>
    <property type="project" value="GO_Central"/>
</dbReference>
<dbReference type="FunFam" id="1.10.472.10:FF:000115">
    <property type="entry name" value="Os02g0607400 protein"/>
    <property type="match status" value="1"/>
</dbReference>
<dbReference type="Gene3D" id="1.10.472.10">
    <property type="entry name" value="Cyclin-like"/>
    <property type="match status" value="2"/>
</dbReference>
<dbReference type="InterPro" id="IPR039361">
    <property type="entry name" value="Cyclin"/>
</dbReference>
<dbReference type="InterPro" id="IPR036915">
    <property type="entry name" value="Cyclin-like_sf"/>
</dbReference>
<dbReference type="InterPro" id="IPR004367">
    <property type="entry name" value="Cyclin_C-dom"/>
</dbReference>
<dbReference type="InterPro" id="IPR006671">
    <property type="entry name" value="Cyclin_N"/>
</dbReference>
<dbReference type="PANTHER" id="PTHR10177">
    <property type="entry name" value="CYCLINS"/>
    <property type="match status" value="1"/>
</dbReference>
<dbReference type="Pfam" id="PF02984">
    <property type="entry name" value="Cyclin_C"/>
    <property type="match status" value="1"/>
</dbReference>
<dbReference type="Pfam" id="PF00134">
    <property type="entry name" value="Cyclin_N"/>
    <property type="match status" value="1"/>
</dbReference>
<dbReference type="SMART" id="SM01332">
    <property type="entry name" value="Cyclin_C"/>
    <property type="match status" value="1"/>
</dbReference>
<dbReference type="SUPFAM" id="SSF47954">
    <property type="entry name" value="Cyclin-like"/>
    <property type="match status" value="2"/>
</dbReference>
<proteinExistence type="inferred from homology"/>